<accession>B2I2H6</accession>
<protein>
    <recommendedName>
        <fullName evidence="1">Dihydroxy-acid dehydratase</fullName>
        <shortName evidence="1">DAD</shortName>
        <ecNumber evidence="1">4.2.1.9</ecNumber>
    </recommendedName>
</protein>
<sequence>MPDYRSKTSTHGRNMAGARGLWRATGMKDEDFGKPIIAVVNSFTQFVPGHVHLKDLGQLVAAEIQAAGGVAKEFNTIAVDDGIAMGHDGMLYSLPSRDLIADSVEYMVNAHCADAMVCISNCDKITPGMLMAAMRLNIPVVFVSGGPMEAGKVKFRGDEKAIDLVDAMVVAADDSYTDEEVAEFERSACPTCGSCSGMFTANSMNCLTEALGLSLPGNGSIVATHANRKKLFLKAGQLIVELAKRYYEQNDASILPRSIATKAAFKNAMTLDIAMGGSTNTVLHLLAAANEAEVDFTMDDIDELSRRVPVLSKVAPAKQDVHMEDVHRAGGIMAILGELDRANLLDVSVPTVHEKTLKDALDKWDIIRTEDPEVYEFYRSSPGGVPTQVAFSQNRYYSTLDGDREKGVIRNAEHAFSKDGGLAVLYGNIALDGCIVKTAGVDESILKFTGTARVFESQDAAVEAILGNEIKAGDVVVIRYEGPRGGPGMQEMLYPTSYLKSKGLGKDCALVTDGRFSGGSSGLSIGHVSPEAAEGGAIGLVEDGDTIEIDIPNRTIHLNIDDATMAHRRTVQEAKGWHPKEERKRKVSKALKVYAMHTTSAAKGAVRVL</sequence>
<evidence type="ECO:0000255" key="1">
    <source>
        <dbReference type="HAMAP-Rule" id="MF_00012"/>
    </source>
</evidence>
<comment type="function">
    <text evidence="1">Functions in the biosynthesis of branched-chain amino acids. Catalyzes the dehydration of (2R,3R)-2,3-dihydroxy-3-methylpentanoate (2,3-dihydroxy-3-methylvalerate) into 2-oxo-3-methylpentanoate (2-oxo-3-methylvalerate) and of (2R)-2,3-dihydroxy-3-methylbutanoate (2,3-dihydroxyisovalerate) into 2-oxo-3-methylbutanoate (2-oxoisovalerate), the penultimate precursor to L-isoleucine and L-valine, respectively.</text>
</comment>
<comment type="catalytic activity">
    <reaction evidence="1">
        <text>(2R)-2,3-dihydroxy-3-methylbutanoate = 3-methyl-2-oxobutanoate + H2O</text>
        <dbReference type="Rhea" id="RHEA:24809"/>
        <dbReference type="ChEBI" id="CHEBI:11851"/>
        <dbReference type="ChEBI" id="CHEBI:15377"/>
        <dbReference type="ChEBI" id="CHEBI:49072"/>
        <dbReference type="EC" id="4.2.1.9"/>
    </reaction>
    <physiologicalReaction direction="left-to-right" evidence="1">
        <dbReference type="Rhea" id="RHEA:24810"/>
    </physiologicalReaction>
</comment>
<comment type="catalytic activity">
    <reaction evidence="1">
        <text>(2R,3R)-2,3-dihydroxy-3-methylpentanoate = (S)-3-methyl-2-oxopentanoate + H2O</text>
        <dbReference type="Rhea" id="RHEA:27694"/>
        <dbReference type="ChEBI" id="CHEBI:15377"/>
        <dbReference type="ChEBI" id="CHEBI:35146"/>
        <dbReference type="ChEBI" id="CHEBI:49258"/>
        <dbReference type="EC" id="4.2.1.9"/>
    </reaction>
    <physiologicalReaction direction="left-to-right" evidence="1">
        <dbReference type="Rhea" id="RHEA:27695"/>
    </physiologicalReaction>
</comment>
<comment type="cofactor">
    <cofactor evidence="1">
        <name>[2Fe-2S] cluster</name>
        <dbReference type="ChEBI" id="CHEBI:190135"/>
    </cofactor>
    <text evidence="1">Binds 1 [2Fe-2S] cluster per subunit. This cluster acts as a Lewis acid cofactor.</text>
</comment>
<comment type="cofactor">
    <cofactor evidence="1">
        <name>Mg(2+)</name>
        <dbReference type="ChEBI" id="CHEBI:18420"/>
    </cofactor>
</comment>
<comment type="pathway">
    <text evidence="1">Amino-acid biosynthesis; L-isoleucine biosynthesis; L-isoleucine from 2-oxobutanoate: step 3/4.</text>
</comment>
<comment type="pathway">
    <text evidence="1">Amino-acid biosynthesis; L-valine biosynthesis; L-valine from pyruvate: step 3/4.</text>
</comment>
<comment type="subunit">
    <text evidence="1">Homodimer.</text>
</comment>
<comment type="similarity">
    <text evidence="1">Belongs to the IlvD/Edd family.</text>
</comment>
<proteinExistence type="inferred from homology"/>
<gene>
    <name evidence="1" type="primary">ilvD</name>
    <name type="ordered locus">ACICU_03654</name>
</gene>
<keyword id="KW-0001">2Fe-2S</keyword>
<keyword id="KW-0028">Amino-acid biosynthesis</keyword>
<keyword id="KW-0100">Branched-chain amino acid biosynthesis</keyword>
<keyword id="KW-0408">Iron</keyword>
<keyword id="KW-0411">Iron-sulfur</keyword>
<keyword id="KW-0456">Lyase</keyword>
<keyword id="KW-0460">Magnesium</keyword>
<keyword id="KW-0479">Metal-binding</keyword>
<dbReference type="EC" id="4.2.1.9" evidence="1"/>
<dbReference type="EMBL" id="CP000863">
    <property type="protein sequence ID" value="ACC58963.1"/>
    <property type="molecule type" value="Genomic_DNA"/>
</dbReference>
<dbReference type="RefSeq" id="WP_001113596.1">
    <property type="nucleotide sequence ID" value="NZ_CP031380.1"/>
</dbReference>
<dbReference type="SMR" id="B2I2H6"/>
<dbReference type="KEGG" id="abc:ACICU_03654"/>
<dbReference type="HOGENOM" id="CLU_014271_4_2_6"/>
<dbReference type="UniPathway" id="UPA00047">
    <property type="reaction ID" value="UER00057"/>
</dbReference>
<dbReference type="UniPathway" id="UPA00049">
    <property type="reaction ID" value="UER00061"/>
</dbReference>
<dbReference type="Proteomes" id="UP000008839">
    <property type="component" value="Chromosome"/>
</dbReference>
<dbReference type="GO" id="GO:0005829">
    <property type="term" value="C:cytosol"/>
    <property type="evidence" value="ECO:0007669"/>
    <property type="project" value="TreeGrafter"/>
</dbReference>
<dbReference type="GO" id="GO:0051537">
    <property type="term" value="F:2 iron, 2 sulfur cluster binding"/>
    <property type="evidence" value="ECO:0007669"/>
    <property type="project" value="UniProtKB-UniRule"/>
</dbReference>
<dbReference type="GO" id="GO:0004160">
    <property type="term" value="F:dihydroxy-acid dehydratase activity"/>
    <property type="evidence" value="ECO:0007669"/>
    <property type="project" value="UniProtKB-UniRule"/>
</dbReference>
<dbReference type="GO" id="GO:0000287">
    <property type="term" value="F:magnesium ion binding"/>
    <property type="evidence" value="ECO:0007669"/>
    <property type="project" value="UniProtKB-UniRule"/>
</dbReference>
<dbReference type="GO" id="GO:0009097">
    <property type="term" value="P:isoleucine biosynthetic process"/>
    <property type="evidence" value="ECO:0007669"/>
    <property type="project" value="UniProtKB-UniRule"/>
</dbReference>
<dbReference type="GO" id="GO:0009099">
    <property type="term" value="P:L-valine biosynthetic process"/>
    <property type="evidence" value="ECO:0007669"/>
    <property type="project" value="UniProtKB-UniRule"/>
</dbReference>
<dbReference type="FunFam" id="3.50.30.80:FF:000001">
    <property type="entry name" value="Dihydroxy-acid dehydratase"/>
    <property type="match status" value="1"/>
</dbReference>
<dbReference type="Gene3D" id="3.50.30.80">
    <property type="entry name" value="IlvD/EDD C-terminal domain-like"/>
    <property type="match status" value="1"/>
</dbReference>
<dbReference type="HAMAP" id="MF_00012">
    <property type="entry name" value="IlvD"/>
    <property type="match status" value="1"/>
</dbReference>
<dbReference type="InterPro" id="IPR042096">
    <property type="entry name" value="Dihydro-acid_dehy_C"/>
</dbReference>
<dbReference type="InterPro" id="IPR004404">
    <property type="entry name" value="DihydroxyA_deHydtase"/>
</dbReference>
<dbReference type="InterPro" id="IPR020558">
    <property type="entry name" value="DiOHA_6PGluconate_deHydtase_CS"/>
</dbReference>
<dbReference type="InterPro" id="IPR056740">
    <property type="entry name" value="ILV_EDD_C"/>
</dbReference>
<dbReference type="InterPro" id="IPR000581">
    <property type="entry name" value="ILV_EDD_N"/>
</dbReference>
<dbReference type="InterPro" id="IPR037237">
    <property type="entry name" value="IlvD/EDD_N"/>
</dbReference>
<dbReference type="NCBIfam" id="TIGR00110">
    <property type="entry name" value="ilvD"/>
    <property type="match status" value="1"/>
</dbReference>
<dbReference type="NCBIfam" id="NF009103">
    <property type="entry name" value="PRK12448.1"/>
    <property type="match status" value="1"/>
</dbReference>
<dbReference type="PANTHER" id="PTHR43661">
    <property type="entry name" value="D-XYLONATE DEHYDRATASE"/>
    <property type="match status" value="1"/>
</dbReference>
<dbReference type="PANTHER" id="PTHR43661:SF3">
    <property type="entry name" value="D-XYLONATE DEHYDRATASE YAGF-RELATED"/>
    <property type="match status" value="1"/>
</dbReference>
<dbReference type="Pfam" id="PF24877">
    <property type="entry name" value="ILV_EDD_C"/>
    <property type="match status" value="1"/>
</dbReference>
<dbReference type="Pfam" id="PF00920">
    <property type="entry name" value="ILVD_EDD_N"/>
    <property type="match status" value="1"/>
</dbReference>
<dbReference type="SUPFAM" id="SSF143975">
    <property type="entry name" value="IlvD/EDD N-terminal domain-like"/>
    <property type="match status" value="1"/>
</dbReference>
<dbReference type="SUPFAM" id="SSF52016">
    <property type="entry name" value="LeuD/IlvD-like"/>
    <property type="match status" value="1"/>
</dbReference>
<dbReference type="PROSITE" id="PS00886">
    <property type="entry name" value="ILVD_EDD_1"/>
    <property type="match status" value="1"/>
</dbReference>
<dbReference type="PROSITE" id="PS00887">
    <property type="entry name" value="ILVD_EDD_2"/>
    <property type="match status" value="1"/>
</dbReference>
<reference key="1">
    <citation type="journal article" date="2008" name="Antimicrob. Agents Chemother.">
        <title>Whole-genome pyrosequencing of an epidemic multidrug-resistant Acinetobacter baumannii strain belonging to the European clone II group.</title>
        <authorList>
            <person name="Iacono M."/>
            <person name="Villa L."/>
            <person name="Fortini D."/>
            <person name="Bordoni R."/>
            <person name="Imperi F."/>
            <person name="Bonnal R.J."/>
            <person name="Sicheritz-Ponten T."/>
            <person name="De Bellis G."/>
            <person name="Visca P."/>
            <person name="Cassone A."/>
            <person name="Carattoli A."/>
        </authorList>
    </citation>
    <scope>NUCLEOTIDE SEQUENCE [LARGE SCALE GENOMIC DNA]</scope>
    <source>
        <strain>ACICU</strain>
    </source>
</reference>
<feature type="chain" id="PRO_1000089359" description="Dihydroxy-acid dehydratase">
    <location>
        <begin position="1"/>
        <end position="609"/>
    </location>
</feature>
<feature type="active site" description="Proton acceptor" evidence="1">
    <location>
        <position position="517"/>
    </location>
</feature>
<feature type="binding site" evidence="1">
    <location>
        <position position="81"/>
    </location>
    <ligand>
        <name>Mg(2+)</name>
        <dbReference type="ChEBI" id="CHEBI:18420"/>
    </ligand>
</feature>
<feature type="binding site" evidence="1">
    <location>
        <position position="122"/>
    </location>
    <ligand>
        <name>[2Fe-2S] cluster</name>
        <dbReference type="ChEBI" id="CHEBI:190135"/>
    </ligand>
</feature>
<feature type="binding site" evidence="1">
    <location>
        <position position="123"/>
    </location>
    <ligand>
        <name>Mg(2+)</name>
        <dbReference type="ChEBI" id="CHEBI:18420"/>
    </ligand>
</feature>
<feature type="binding site" description="via carbamate group" evidence="1">
    <location>
        <position position="124"/>
    </location>
    <ligand>
        <name>Mg(2+)</name>
        <dbReference type="ChEBI" id="CHEBI:18420"/>
    </ligand>
</feature>
<feature type="binding site" evidence="1">
    <location>
        <position position="195"/>
    </location>
    <ligand>
        <name>[2Fe-2S] cluster</name>
        <dbReference type="ChEBI" id="CHEBI:190135"/>
    </ligand>
</feature>
<feature type="binding site" evidence="1">
    <location>
        <position position="491"/>
    </location>
    <ligand>
        <name>Mg(2+)</name>
        <dbReference type="ChEBI" id="CHEBI:18420"/>
    </ligand>
</feature>
<feature type="modified residue" description="N6-carboxylysine" evidence="1">
    <location>
        <position position="124"/>
    </location>
</feature>
<name>ILVD_ACIBC</name>
<organism>
    <name type="scientific">Acinetobacter baumannii (strain ACICU)</name>
    <dbReference type="NCBI Taxonomy" id="405416"/>
    <lineage>
        <taxon>Bacteria</taxon>
        <taxon>Pseudomonadati</taxon>
        <taxon>Pseudomonadota</taxon>
        <taxon>Gammaproteobacteria</taxon>
        <taxon>Moraxellales</taxon>
        <taxon>Moraxellaceae</taxon>
        <taxon>Acinetobacter</taxon>
        <taxon>Acinetobacter calcoaceticus/baumannii complex</taxon>
    </lineage>
</organism>